<proteinExistence type="evidence at protein level"/>
<feature type="chain" id="PRO_0000350426" description="Ribosomal RNA large subunit methyltransferase Cfr">
    <location>
        <begin position="1"/>
        <end position="349"/>
    </location>
</feature>
<feature type="domain" description="Radical SAM core" evidence="2">
    <location>
        <begin position="98"/>
        <end position="333"/>
    </location>
</feature>
<feature type="active site" description="Proton acceptor" evidence="1">
    <location>
        <position position="91"/>
    </location>
</feature>
<feature type="active site" description="S-methylcysteine intermediate" evidence="1">
    <location>
        <position position="338"/>
    </location>
</feature>
<feature type="binding site" evidence="1">
    <location>
        <position position="112"/>
    </location>
    <ligand>
        <name>[4Fe-4S] cluster</name>
        <dbReference type="ChEBI" id="CHEBI:49883"/>
        <note>4Fe-4S-S-AdoMet</note>
    </ligand>
</feature>
<feature type="binding site" evidence="1">
    <location>
        <position position="116"/>
    </location>
    <ligand>
        <name>[4Fe-4S] cluster</name>
        <dbReference type="ChEBI" id="CHEBI:49883"/>
        <note>4Fe-4S-S-AdoMet</note>
    </ligand>
</feature>
<feature type="binding site" evidence="1">
    <location>
        <position position="119"/>
    </location>
    <ligand>
        <name>[4Fe-4S] cluster</name>
        <dbReference type="ChEBI" id="CHEBI:49883"/>
        <note>4Fe-4S-S-AdoMet</note>
    </ligand>
</feature>
<feature type="binding site" evidence="1">
    <location>
        <begin position="158"/>
        <end position="159"/>
    </location>
    <ligand>
        <name>S-adenosyl-L-methionine</name>
        <dbReference type="ChEBI" id="CHEBI:59789"/>
    </ligand>
</feature>
<feature type="binding site" evidence="1">
    <location>
        <position position="189"/>
    </location>
    <ligand>
        <name>S-adenosyl-L-methionine</name>
        <dbReference type="ChEBI" id="CHEBI:59789"/>
    </ligand>
</feature>
<feature type="binding site" evidence="1">
    <location>
        <begin position="212"/>
        <end position="214"/>
    </location>
    <ligand>
        <name>S-adenosyl-L-methionine</name>
        <dbReference type="ChEBI" id="CHEBI:59789"/>
    </ligand>
</feature>
<feature type="binding site" evidence="1">
    <location>
        <position position="293"/>
    </location>
    <ligand>
        <name>S-adenosyl-L-methionine</name>
        <dbReference type="ChEBI" id="CHEBI:59789"/>
    </ligand>
</feature>
<feature type="disulfide bond" description="(transient)" evidence="1">
    <location>
        <begin position="105"/>
        <end position="338"/>
    </location>
</feature>
<feature type="sequence conflict" description="In Ref. 1; CAJ30491." evidence="7" ref="1">
    <original>A</original>
    <variation>D</variation>
    <location>
        <position position="254"/>
    </location>
</feature>
<evidence type="ECO:0000255" key="1">
    <source>
        <dbReference type="HAMAP-Rule" id="MF_01873"/>
    </source>
</evidence>
<evidence type="ECO:0000255" key="2">
    <source>
        <dbReference type="PROSITE-ProRule" id="PRU01266"/>
    </source>
</evidence>
<evidence type="ECO:0000269" key="3">
    <source>
    </source>
</evidence>
<evidence type="ECO:0000269" key="4">
    <source>
    </source>
</evidence>
<evidence type="ECO:0000269" key="5">
    <source>
    </source>
</evidence>
<evidence type="ECO:0000269" key="6">
    <source>
    </source>
</evidence>
<evidence type="ECO:0000305" key="7"/>
<accession>A5HBL2</accession>
<accession>Q3MQ55</accession>
<comment type="function">
    <text evidence="1 3 4 5">Specifically methylates position 8 of adenine 2503 in 23S rRNA. Confers resistance to some classes of antibiotics, such as chloramphenicol, florfenicol, clindamycin and linezolid.</text>
</comment>
<comment type="catalytic activity">
    <reaction evidence="1 5">
        <text>adenosine(2503) in 23S rRNA + 2 reduced [2Fe-2S]-[ferredoxin] + 2 S-adenosyl-L-methionine = 8-methyladenosine(2503) in 23S rRNA + 5'-deoxyadenosine + L-methionine + 2 oxidized [2Fe-2S]-[ferredoxin] + S-adenosyl-L-homocysteine</text>
        <dbReference type="Rhea" id="RHEA:42632"/>
        <dbReference type="Rhea" id="RHEA-COMP:10000"/>
        <dbReference type="Rhea" id="RHEA-COMP:10001"/>
        <dbReference type="Rhea" id="RHEA-COMP:10152"/>
        <dbReference type="Rhea" id="RHEA-COMP:10153"/>
        <dbReference type="ChEBI" id="CHEBI:17319"/>
        <dbReference type="ChEBI" id="CHEBI:33737"/>
        <dbReference type="ChEBI" id="CHEBI:33738"/>
        <dbReference type="ChEBI" id="CHEBI:57844"/>
        <dbReference type="ChEBI" id="CHEBI:57856"/>
        <dbReference type="ChEBI" id="CHEBI:59789"/>
        <dbReference type="ChEBI" id="CHEBI:74411"/>
        <dbReference type="ChEBI" id="CHEBI:74543"/>
        <dbReference type="EC" id="2.1.1.224"/>
    </reaction>
</comment>
<comment type="cofactor">
    <cofactor evidence="1 6">
        <name>[4Fe-4S] cluster</name>
        <dbReference type="ChEBI" id="CHEBI:49883"/>
    </cofactor>
    <text evidence="1 6">Binds 1 [4Fe-4S] cluster. The cluster is coordinated with 3 cysteines and an exchangeable S-adenosyl-L-methionine.</text>
</comment>
<comment type="subcellular location">
    <subcellularLocation>
        <location evidence="1">Cytoplasm</location>
    </subcellularLocation>
</comment>
<comment type="miscellaneous">
    <text evidence="7">Reaction proceeds by a ping-pong mechanism involving intermediate methylation of a conserved cysteine residue. In details, the methyl group from one SAM molecule is initially transferred to Cys-338 in a typical SN2 displacement. Then a 5'-dA radical formed from a second molecule of SAM abstracts a hydrogen from the methyl group of mCys-338, and the resulting Cys-appended methyl radical attacks the substrate adenine ring. Methyl transfer to C8 thus results in a covalent adduct between the substrate and Cys-338, which is resolved by formation of a disulfide bond between Cys-338 and a second conserved Cys residue (Cys-105) (Probable).</text>
</comment>
<comment type="similarity">
    <text evidence="1">Belongs to the radical SAM superfamily. RlmN family. Cfr subfamily.</text>
</comment>
<geneLocation type="plasmid">
    <name>pSCFS3</name>
</geneLocation>
<keyword id="KW-0004">4Fe-4S</keyword>
<keyword id="KW-0046">Antibiotic resistance</keyword>
<keyword id="KW-0963">Cytoplasm</keyword>
<keyword id="KW-1015">Disulfide bond</keyword>
<keyword id="KW-0408">Iron</keyword>
<keyword id="KW-0411">Iron-sulfur</keyword>
<keyword id="KW-0479">Metal-binding</keyword>
<keyword id="KW-0489">Methyltransferase</keyword>
<keyword id="KW-0614">Plasmid</keyword>
<keyword id="KW-0698">rRNA processing</keyword>
<keyword id="KW-0949">S-adenosyl-L-methionine</keyword>
<keyword id="KW-0808">Transferase</keyword>
<sequence length="349" mass="39862">MNFNNKTKYGKIQEFLRSNNEPDYRIKQITNAIFKQRISRFEDMKVLPKLLREDLINNFGETVLNIKLLAEQNSEQVTKVLFEVSKNERVETVNMKYKAGWESFCISSQCGCNFGCKFCATGDIGLKKNLTVDEITDQVLYFHLLGHQIDSISFMGMGEALANRQVFDALDSFTDPNLFALSPRRLSISTIGIIPSIKKITQEYPQVNLTFSLHSPYSEERSKLMPINDRYPIDEVMNILDEHIRLTSRKVYIAYIMLPGVNDSLEHANEVVSLLKSRYKSGKLYHVNLIRYNPTISAPEMYGEANEGQVEAFYKVLKSAGIHVTIRSQFGIDIDAACGQLYGNYQNSQ</sequence>
<protein>
    <recommendedName>
        <fullName evidence="1">Ribosomal RNA large subunit methyltransferase Cfr</fullName>
        <ecNumber evidence="1 5">2.1.1.224</ecNumber>
    </recommendedName>
    <alternativeName>
        <fullName evidence="1">23S rRNA (adenine(2503)-C(8))-methyltransferase</fullName>
    </alternativeName>
    <alternativeName>
        <fullName evidence="1">23S rRNA m8A2503 methyltransferase</fullName>
    </alternativeName>
</protein>
<gene>
    <name evidence="1" type="primary">cfr</name>
</gene>
<organism>
    <name type="scientific">Staphylococcus aureus</name>
    <dbReference type="NCBI Taxonomy" id="1280"/>
    <lineage>
        <taxon>Bacteria</taxon>
        <taxon>Bacillati</taxon>
        <taxon>Bacillota</taxon>
        <taxon>Bacilli</taxon>
        <taxon>Bacillales</taxon>
        <taxon>Staphylococcaceae</taxon>
        <taxon>Staphylococcus</taxon>
    </lineage>
</organism>
<name>CFR_STAAU</name>
<reference key="1">
    <citation type="journal article" date="2006" name="Antimicrob. Agents Chemother.">
        <title>Distribution of florfenicol resistance genes fexA and cfr among chloramphenicol-resistant Staphylococcus isolates.</title>
        <authorList>
            <person name="Kehrenberg C."/>
            <person name="Schwarz S."/>
        </authorList>
    </citation>
    <scope>NUCLEOTIDE SEQUENCE [GENOMIC DNA]</scope>
    <source>
        <strain>11</strain>
        <plasmid>pSCFS3</plasmid>
    </source>
</reference>
<reference key="2">
    <citation type="journal article" date="2007" name="Mol. Microbiol.">
        <title>Acquisition of a natural resistance gene renders a clinical strain of methicillin-resistant Staphylococcus aureus resistant to the synthetic antibiotic linezolid.</title>
        <authorList>
            <person name="Toh S.M."/>
            <person name="Xiong L."/>
            <person name="Arias C.A."/>
            <person name="Villegas M.V."/>
            <person name="Lolans K."/>
            <person name="Quinn J."/>
            <person name="Mankin A.S."/>
        </authorList>
    </citation>
    <scope>NUCLEOTIDE SEQUENCE [GENOMIC DNA]</scope>
    <scope>PROBABLE FUNCTION</scope>
    <scope>ANTIBIOTIC RESISTANCE</scope>
    <source>
        <strain>CM05</strain>
    </source>
</reference>
<reference key="3">
    <citation type="journal article" date="2008" name="Antimicrob. Agents Chemother.">
        <title>First report of cfr-mediated resistance to linezolid in human staphylococcal clinical isolates recovered in the United States.</title>
        <authorList>
            <person name="Mendes R.E."/>
            <person name="Deshpande L.M."/>
            <person name="Castanheira M."/>
            <person name="DiPersio J."/>
            <person name="Saubolle M.A."/>
            <person name="Jones R.N."/>
        </authorList>
    </citation>
    <scope>NUCLEOTIDE SEQUENCE [GENOMIC DNA]</scope>
    <scope>FUNCTION IN ANTIBIOTIC RESISTANCE</scope>
    <source>
        <strain>004-737X</strain>
    </source>
</reference>
<reference key="4">
    <citation type="journal article" date="2005" name="Mol. Microbiol.">
        <title>A new mechanism for chloramphenicol, florfenicol and clindamycin resistance: methylation of 23S ribosomal RNA at A2503.</title>
        <authorList>
            <person name="Kehrenberg C."/>
            <person name="Schwarz S."/>
            <person name="Jacobsen L."/>
            <person name="Hansen L.H."/>
            <person name="Vester B."/>
        </authorList>
    </citation>
    <scope>FUNCTION IN ANTIBIOTIC RESISTANCE</scope>
    <scope>METHYLTRANSFERASE ACTIVITY</scope>
    <source>
        <strain>405/2002</strain>
    </source>
</reference>
<reference key="5">
    <citation type="journal article" date="2011" name="J. Am. Chem. Soc.">
        <title>Cfr and RlmN contain a single [4Fe-4S] cluster, which directs two distinct reactivities for S-adenosylmethionine: methyl transfer by SN2 displacement and radical generation.</title>
        <authorList>
            <person name="Grove T.L."/>
            <person name="Radle M.I."/>
            <person name="Krebs C."/>
            <person name="Booker S.J."/>
        </authorList>
    </citation>
    <scope>COFACTOR</scope>
</reference>
<reference key="6">
    <citation type="journal article" date="2011" name="Science">
        <title>A radically different mechanism for S-adenosylmethionine-dependent methyltransferases.</title>
        <authorList>
            <person name="Grove T.L."/>
            <person name="Benner J.S."/>
            <person name="Radle M.I."/>
            <person name="Ahlum J.H."/>
            <person name="Landgraf B.J."/>
            <person name="Krebs C."/>
            <person name="Booker S.J."/>
        </authorList>
    </citation>
    <scope>FUNCTION AS A 23S RRNA A2503 METHYLTRANSFERASE</scope>
    <scope>CATALYTIC ACTIVITY</scope>
    <scope>REACTION MECHANISM</scope>
</reference>
<dbReference type="EC" id="2.1.1.224" evidence="1 5"/>
<dbReference type="EMBL" id="AM086211">
    <property type="protein sequence ID" value="CAJ30491.1"/>
    <property type="molecule type" value="Genomic_DNA"/>
</dbReference>
<dbReference type="EMBL" id="EF450709">
    <property type="protein sequence ID" value="ABQ00063.1"/>
    <property type="molecule type" value="Genomic_DNA"/>
</dbReference>
<dbReference type="EMBL" id="KC206006">
    <property type="protein sequence ID" value="ACC77590.1"/>
    <property type="molecule type" value="Genomic_DNA"/>
</dbReference>
<dbReference type="RefSeq" id="WP_001010505.1">
    <property type="nucleotide sequence ID" value="NZ_WIVJ01000004.1"/>
</dbReference>
<dbReference type="RefSeq" id="WP_032491462.1">
    <property type="nucleotide sequence ID" value="NG_047632.1"/>
</dbReference>
<dbReference type="RefSeq" id="YP_007878372.1">
    <property type="nucleotide sequence ID" value="NC_021076.1"/>
</dbReference>
<dbReference type="RefSeq" id="YP_007988851.1">
    <property type="nucleotide sequence ID" value="NC_021230.1"/>
</dbReference>
<dbReference type="SMR" id="A5HBL2"/>
<dbReference type="BRENDA" id="2.1.1.224">
    <property type="organism ID" value="3352"/>
</dbReference>
<dbReference type="GO" id="GO:0005737">
    <property type="term" value="C:cytoplasm"/>
    <property type="evidence" value="ECO:0007669"/>
    <property type="project" value="UniProtKB-SubCell"/>
</dbReference>
<dbReference type="GO" id="GO:0051539">
    <property type="term" value="F:4 iron, 4 sulfur cluster binding"/>
    <property type="evidence" value="ECO:0007669"/>
    <property type="project" value="UniProtKB-UniRule"/>
</dbReference>
<dbReference type="GO" id="GO:0046872">
    <property type="term" value="F:metal ion binding"/>
    <property type="evidence" value="ECO:0007669"/>
    <property type="project" value="UniProtKB-KW"/>
</dbReference>
<dbReference type="GO" id="GO:0016433">
    <property type="term" value="F:rRNA (adenine) methyltransferase activity"/>
    <property type="evidence" value="ECO:0007669"/>
    <property type="project" value="UniProtKB-UniRule"/>
</dbReference>
<dbReference type="GO" id="GO:0019843">
    <property type="term" value="F:rRNA binding"/>
    <property type="evidence" value="ECO:0007669"/>
    <property type="project" value="UniProtKB-UniRule"/>
</dbReference>
<dbReference type="GO" id="GO:0046677">
    <property type="term" value="P:response to antibiotic"/>
    <property type="evidence" value="ECO:0007669"/>
    <property type="project" value="UniProtKB-KW"/>
</dbReference>
<dbReference type="GO" id="GO:0070475">
    <property type="term" value="P:rRNA base methylation"/>
    <property type="evidence" value="ECO:0007669"/>
    <property type="project" value="UniProtKB-UniRule"/>
</dbReference>
<dbReference type="GO" id="GO:0030488">
    <property type="term" value="P:tRNA methylation"/>
    <property type="evidence" value="ECO:0007669"/>
    <property type="project" value="TreeGrafter"/>
</dbReference>
<dbReference type="CDD" id="cd01335">
    <property type="entry name" value="Radical_SAM"/>
    <property type="match status" value="1"/>
</dbReference>
<dbReference type="Gene3D" id="1.10.150.530">
    <property type="match status" value="1"/>
</dbReference>
<dbReference type="Gene3D" id="3.20.20.70">
    <property type="entry name" value="Aldolase class I"/>
    <property type="match status" value="1"/>
</dbReference>
<dbReference type="HAMAP" id="MF_01873">
    <property type="entry name" value="23SrRNA_methyltr_Cfr"/>
    <property type="match status" value="1"/>
</dbReference>
<dbReference type="InterPro" id="IPR013785">
    <property type="entry name" value="Aldolase_TIM"/>
</dbReference>
<dbReference type="InterPro" id="IPR040072">
    <property type="entry name" value="Methyltransferase_A"/>
</dbReference>
<dbReference type="InterPro" id="IPR022881">
    <property type="entry name" value="rRNA_lsu_MeTfrase_Cfr"/>
</dbReference>
<dbReference type="InterPro" id="IPR004383">
    <property type="entry name" value="rRNA_lsu_MTrfase_RlmN/Cfr"/>
</dbReference>
<dbReference type="InterPro" id="IPR007197">
    <property type="entry name" value="rSAM"/>
</dbReference>
<dbReference type="NCBIfam" id="NF000424">
    <property type="entry name" value="CfrAB"/>
    <property type="match status" value="1"/>
</dbReference>
<dbReference type="NCBIfam" id="NF011024">
    <property type="entry name" value="PRK14453.1"/>
    <property type="match status" value="1"/>
</dbReference>
<dbReference type="NCBIfam" id="TIGR04432">
    <property type="entry name" value="rSAM_Cfr"/>
    <property type="match status" value="1"/>
</dbReference>
<dbReference type="PANTHER" id="PTHR30544">
    <property type="entry name" value="23S RRNA METHYLTRANSFERASE"/>
    <property type="match status" value="1"/>
</dbReference>
<dbReference type="PANTHER" id="PTHR30544:SF5">
    <property type="entry name" value="RADICAL SAM CORE DOMAIN-CONTAINING PROTEIN"/>
    <property type="match status" value="1"/>
</dbReference>
<dbReference type="Pfam" id="PF04055">
    <property type="entry name" value="Radical_SAM"/>
    <property type="match status" value="1"/>
</dbReference>
<dbReference type="PIRSF" id="PIRSF006004">
    <property type="entry name" value="CHP00048"/>
    <property type="match status" value="1"/>
</dbReference>
<dbReference type="SFLD" id="SFLDF00275">
    <property type="entry name" value="adenosine_C2_methyltransferase"/>
    <property type="match status" value="1"/>
</dbReference>
<dbReference type="SFLD" id="SFLDF00296">
    <property type="entry name" value="adenosine_C8_methyltransferase"/>
    <property type="match status" value="1"/>
</dbReference>
<dbReference type="SFLD" id="SFLDS00029">
    <property type="entry name" value="Radical_SAM"/>
    <property type="match status" value="2"/>
</dbReference>
<dbReference type="SUPFAM" id="SSF102114">
    <property type="entry name" value="Radical SAM enzymes"/>
    <property type="match status" value="1"/>
</dbReference>
<dbReference type="PROSITE" id="PS51918">
    <property type="entry name" value="RADICAL_SAM"/>
    <property type="match status" value="1"/>
</dbReference>